<protein>
    <recommendedName>
        <fullName evidence="1">Large ribosomal subunit protein uL1</fullName>
    </recommendedName>
    <alternativeName>
        <fullName evidence="2">50S ribosomal protein L1</fullName>
    </alternativeName>
</protein>
<name>RL1_VIBPA</name>
<sequence>MAKLTKRMRVIREKVDVTKEYEINEAVALLQELATAKFVESVDVAVNLGIDARKSDQNVRGATVLPHGTGRDIRVAVFTQGANAEAAKEAGADIVGMEDLAEQVKKGEMNFDVVVASPDAMRVVGQLGTILGPRGLMPNPKVGTVTPNVAEAVKNAKAGQVRYRNDKNGIIHTTIGKANFSAEQIKENLEALLVALKKAKPSSAKGTFLKKVSISTTMGAGVAVDQASLNTQA</sequence>
<gene>
    <name evidence="1" type="primary">rplA</name>
    <name type="ordered locus">VP2925</name>
</gene>
<feature type="chain" id="PRO_0000125773" description="Large ribosomal subunit protein uL1">
    <location>
        <begin position="1"/>
        <end position="233"/>
    </location>
</feature>
<proteinExistence type="inferred from homology"/>
<keyword id="KW-0678">Repressor</keyword>
<keyword id="KW-0687">Ribonucleoprotein</keyword>
<keyword id="KW-0689">Ribosomal protein</keyword>
<keyword id="KW-0694">RNA-binding</keyword>
<keyword id="KW-0699">rRNA-binding</keyword>
<keyword id="KW-0810">Translation regulation</keyword>
<keyword id="KW-0820">tRNA-binding</keyword>
<accession>Q87KQ1</accession>
<dbReference type="EMBL" id="BA000031">
    <property type="protein sequence ID" value="BAC61188.1"/>
    <property type="molecule type" value="Genomic_DNA"/>
</dbReference>
<dbReference type="RefSeq" id="NP_799304.1">
    <property type="nucleotide sequence ID" value="NC_004603.1"/>
</dbReference>
<dbReference type="RefSeq" id="WP_005489780.1">
    <property type="nucleotide sequence ID" value="NC_004603.1"/>
</dbReference>
<dbReference type="SMR" id="Q87KQ1"/>
<dbReference type="GeneID" id="1190500"/>
<dbReference type="KEGG" id="vpa:VP2925"/>
<dbReference type="PATRIC" id="fig|223926.6.peg.2813"/>
<dbReference type="eggNOG" id="COG0081">
    <property type="taxonomic scope" value="Bacteria"/>
</dbReference>
<dbReference type="HOGENOM" id="CLU_062853_0_0_6"/>
<dbReference type="Proteomes" id="UP000002493">
    <property type="component" value="Chromosome 1"/>
</dbReference>
<dbReference type="GO" id="GO:0022625">
    <property type="term" value="C:cytosolic large ribosomal subunit"/>
    <property type="evidence" value="ECO:0007669"/>
    <property type="project" value="TreeGrafter"/>
</dbReference>
<dbReference type="GO" id="GO:0019843">
    <property type="term" value="F:rRNA binding"/>
    <property type="evidence" value="ECO:0007669"/>
    <property type="project" value="UniProtKB-UniRule"/>
</dbReference>
<dbReference type="GO" id="GO:0003735">
    <property type="term" value="F:structural constituent of ribosome"/>
    <property type="evidence" value="ECO:0007669"/>
    <property type="project" value="InterPro"/>
</dbReference>
<dbReference type="GO" id="GO:0000049">
    <property type="term" value="F:tRNA binding"/>
    <property type="evidence" value="ECO:0007669"/>
    <property type="project" value="UniProtKB-KW"/>
</dbReference>
<dbReference type="GO" id="GO:0006417">
    <property type="term" value="P:regulation of translation"/>
    <property type="evidence" value="ECO:0007669"/>
    <property type="project" value="UniProtKB-KW"/>
</dbReference>
<dbReference type="GO" id="GO:0006412">
    <property type="term" value="P:translation"/>
    <property type="evidence" value="ECO:0007669"/>
    <property type="project" value="UniProtKB-UniRule"/>
</dbReference>
<dbReference type="CDD" id="cd00403">
    <property type="entry name" value="Ribosomal_L1"/>
    <property type="match status" value="1"/>
</dbReference>
<dbReference type="FunFam" id="3.40.50.790:FF:000001">
    <property type="entry name" value="50S ribosomal protein L1"/>
    <property type="match status" value="1"/>
</dbReference>
<dbReference type="Gene3D" id="3.30.190.20">
    <property type="match status" value="1"/>
</dbReference>
<dbReference type="Gene3D" id="3.40.50.790">
    <property type="match status" value="1"/>
</dbReference>
<dbReference type="HAMAP" id="MF_01318_B">
    <property type="entry name" value="Ribosomal_uL1_B"/>
    <property type="match status" value="1"/>
</dbReference>
<dbReference type="InterPro" id="IPR005878">
    <property type="entry name" value="Ribosom_uL1_bac-type"/>
</dbReference>
<dbReference type="InterPro" id="IPR002143">
    <property type="entry name" value="Ribosomal_uL1"/>
</dbReference>
<dbReference type="InterPro" id="IPR023674">
    <property type="entry name" value="Ribosomal_uL1-like"/>
</dbReference>
<dbReference type="InterPro" id="IPR028364">
    <property type="entry name" value="Ribosomal_uL1/biogenesis"/>
</dbReference>
<dbReference type="InterPro" id="IPR016095">
    <property type="entry name" value="Ribosomal_uL1_3-a/b-sand"/>
</dbReference>
<dbReference type="InterPro" id="IPR023673">
    <property type="entry name" value="Ribosomal_uL1_CS"/>
</dbReference>
<dbReference type="NCBIfam" id="TIGR01169">
    <property type="entry name" value="rplA_bact"/>
    <property type="match status" value="1"/>
</dbReference>
<dbReference type="PANTHER" id="PTHR36427">
    <property type="entry name" value="54S RIBOSOMAL PROTEIN L1, MITOCHONDRIAL"/>
    <property type="match status" value="1"/>
</dbReference>
<dbReference type="PANTHER" id="PTHR36427:SF3">
    <property type="entry name" value="LARGE RIBOSOMAL SUBUNIT PROTEIN UL1M"/>
    <property type="match status" value="1"/>
</dbReference>
<dbReference type="Pfam" id="PF00687">
    <property type="entry name" value="Ribosomal_L1"/>
    <property type="match status" value="1"/>
</dbReference>
<dbReference type="PIRSF" id="PIRSF002155">
    <property type="entry name" value="Ribosomal_L1"/>
    <property type="match status" value="1"/>
</dbReference>
<dbReference type="SUPFAM" id="SSF56808">
    <property type="entry name" value="Ribosomal protein L1"/>
    <property type="match status" value="1"/>
</dbReference>
<dbReference type="PROSITE" id="PS01199">
    <property type="entry name" value="RIBOSOMAL_L1"/>
    <property type="match status" value="1"/>
</dbReference>
<reference key="1">
    <citation type="journal article" date="2003" name="Lancet">
        <title>Genome sequence of Vibrio parahaemolyticus: a pathogenic mechanism distinct from that of V. cholerae.</title>
        <authorList>
            <person name="Makino K."/>
            <person name="Oshima K."/>
            <person name="Kurokawa K."/>
            <person name="Yokoyama K."/>
            <person name="Uda T."/>
            <person name="Tagomori K."/>
            <person name="Iijima Y."/>
            <person name="Najima M."/>
            <person name="Nakano M."/>
            <person name="Yamashita A."/>
            <person name="Kubota Y."/>
            <person name="Kimura S."/>
            <person name="Yasunaga T."/>
            <person name="Honda T."/>
            <person name="Shinagawa H."/>
            <person name="Hattori M."/>
            <person name="Iida T."/>
        </authorList>
    </citation>
    <scope>NUCLEOTIDE SEQUENCE [LARGE SCALE GENOMIC DNA]</scope>
    <source>
        <strain>RIMD 2210633</strain>
    </source>
</reference>
<organism>
    <name type="scientific">Vibrio parahaemolyticus serotype O3:K6 (strain RIMD 2210633)</name>
    <dbReference type="NCBI Taxonomy" id="223926"/>
    <lineage>
        <taxon>Bacteria</taxon>
        <taxon>Pseudomonadati</taxon>
        <taxon>Pseudomonadota</taxon>
        <taxon>Gammaproteobacteria</taxon>
        <taxon>Vibrionales</taxon>
        <taxon>Vibrionaceae</taxon>
        <taxon>Vibrio</taxon>
    </lineage>
</organism>
<comment type="function">
    <text evidence="1">Binds directly to 23S rRNA. The L1 stalk is quite mobile in the ribosome, and is involved in E site tRNA release.</text>
</comment>
<comment type="function">
    <text evidence="1">Protein L1 is also a translational repressor protein, it controls the translation of the L11 operon by binding to its mRNA.</text>
</comment>
<comment type="subunit">
    <text evidence="1">Part of the 50S ribosomal subunit.</text>
</comment>
<comment type="similarity">
    <text evidence="1">Belongs to the universal ribosomal protein uL1 family.</text>
</comment>
<evidence type="ECO:0000255" key="1">
    <source>
        <dbReference type="HAMAP-Rule" id="MF_01318"/>
    </source>
</evidence>
<evidence type="ECO:0000305" key="2"/>